<feature type="signal peptide" evidence="4">
    <location>
        <begin position="1"/>
        <end position="34"/>
    </location>
</feature>
<feature type="chain" id="PRO_0000387542" description="Probable LRR receptor-like serine/threonine-protein kinase At1g74360">
    <location>
        <begin position="35"/>
        <end position="1106"/>
    </location>
</feature>
<feature type="topological domain" description="Extracellular" evidence="4">
    <location>
        <begin position="35"/>
        <end position="736"/>
    </location>
</feature>
<feature type="transmembrane region" description="Helical" evidence="4">
    <location>
        <begin position="737"/>
        <end position="757"/>
    </location>
</feature>
<feature type="topological domain" description="Cytoplasmic" evidence="4">
    <location>
        <begin position="758"/>
        <end position="1106"/>
    </location>
</feature>
<feature type="repeat" description="LRR 1">
    <location>
        <begin position="86"/>
        <end position="109"/>
    </location>
</feature>
<feature type="repeat" description="LRR 2">
    <location>
        <begin position="110"/>
        <end position="134"/>
    </location>
</feature>
<feature type="repeat" description="LRR 3">
    <location>
        <begin position="136"/>
        <end position="156"/>
    </location>
</feature>
<feature type="repeat" description="LRR 4">
    <location>
        <begin position="157"/>
        <end position="182"/>
    </location>
</feature>
<feature type="repeat" description="LRR 5">
    <location>
        <begin position="184"/>
        <end position="204"/>
    </location>
</feature>
<feature type="repeat" description="LRR 6">
    <location>
        <begin position="205"/>
        <end position="226"/>
    </location>
</feature>
<feature type="repeat" description="LRR 7">
    <location>
        <begin position="227"/>
        <end position="250"/>
    </location>
</feature>
<feature type="repeat" description="LRR 8">
    <location>
        <begin position="252"/>
        <end position="275"/>
    </location>
</feature>
<feature type="repeat" description="LRR 9">
    <location>
        <begin position="276"/>
        <end position="299"/>
    </location>
</feature>
<feature type="repeat" description="LRR 10">
    <location>
        <begin position="300"/>
        <end position="323"/>
    </location>
</feature>
<feature type="repeat" description="LRR 11">
    <location>
        <begin position="325"/>
        <end position="346"/>
    </location>
</feature>
<feature type="repeat" description="LRR 12">
    <location>
        <begin position="348"/>
        <end position="371"/>
    </location>
</feature>
<feature type="repeat" description="LRR 13">
    <location>
        <begin position="372"/>
        <end position="396"/>
    </location>
</feature>
<feature type="repeat" description="LRR 14">
    <location>
        <begin position="398"/>
        <end position="419"/>
    </location>
</feature>
<feature type="repeat" description="LRR 15">
    <location>
        <begin position="420"/>
        <end position="443"/>
    </location>
</feature>
<feature type="repeat" description="LRR 16">
    <location>
        <begin position="445"/>
        <end position="468"/>
    </location>
</feature>
<feature type="repeat" description="LRR 17">
    <location>
        <begin position="470"/>
        <end position="492"/>
    </location>
</feature>
<feature type="repeat" description="LRR 18">
    <location>
        <begin position="566"/>
        <end position="593"/>
    </location>
</feature>
<feature type="repeat" description="LRR 19">
    <location>
        <begin position="594"/>
        <end position="617"/>
    </location>
</feature>
<feature type="repeat" description="LRR 20">
    <location>
        <begin position="619"/>
        <end position="640"/>
    </location>
</feature>
<feature type="repeat" description="LRR 21">
    <location>
        <begin position="641"/>
        <end position="664"/>
    </location>
</feature>
<feature type="repeat" description="LRR 22">
    <location>
        <begin position="666"/>
        <end position="690"/>
    </location>
</feature>
<feature type="domain" description="Protein kinase" evidence="5">
    <location>
        <begin position="814"/>
        <end position="1095"/>
    </location>
</feature>
<feature type="active site" description="Proton acceptor" evidence="5 6">
    <location>
        <position position="941"/>
    </location>
</feature>
<feature type="binding site" evidence="5">
    <location>
        <begin position="820"/>
        <end position="828"/>
    </location>
    <ligand>
        <name>ATP</name>
        <dbReference type="ChEBI" id="CHEBI:30616"/>
    </ligand>
</feature>
<feature type="binding site" evidence="5">
    <location>
        <position position="842"/>
    </location>
    <ligand>
        <name>ATP</name>
        <dbReference type="ChEBI" id="CHEBI:30616"/>
    </ligand>
</feature>
<feature type="modified residue" description="Phosphothreonine" evidence="2">
    <location>
        <position position="803"/>
    </location>
</feature>
<feature type="modified residue" description="Phosphothreonine" evidence="2">
    <location>
        <position position="811"/>
    </location>
</feature>
<feature type="modified residue" description="Phosphotyrosine" evidence="1">
    <location>
        <position position="983"/>
    </location>
</feature>
<feature type="modified residue" description="Phosphothreonine" evidence="3">
    <location>
        <position position="991"/>
    </location>
</feature>
<feature type="glycosylation site" description="N-linked (GlcNAc...) asparagine" evidence="4">
    <location>
        <position position="93"/>
    </location>
</feature>
<feature type="glycosylation site" description="N-linked (GlcNAc...) asparagine" evidence="4">
    <location>
        <position position="106"/>
    </location>
</feature>
<feature type="glycosylation site" description="N-linked (GlcNAc...) asparagine" evidence="4">
    <location>
        <position position="141"/>
    </location>
</feature>
<feature type="glycosylation site" description="N-linked (GlcNAc...) asparagine" evidence="4">
    <location>
        <position position="188"/>
    </location>
</feature>
<feature type="glycosylation site" description="N-linked (GlcNAc...) asparagine" evidence="4">
    <location>
        <position position="193"/>
    </location>
</feature>
<feature type="glycosylation site" description="N-linked (GlcNAc...) asparagine" evidence="4">
    <location>
        <position position="242"/>
    </location>
</feature>
<feature type="glycosylation site" description="N-linked (GlcNAc...) asparagine" evidence="4">
    <location>
        <position position="251"/>
    </location>
</feature>
<feature type="glycosylation site" description="N-linked (GlcNAc...) asparagine" evidence="4">
    <location>
        <position position="309"/>
    </location>
</feature>
<feature type="glycosylation site" description="N-linked (GlcNAc...) asparagine" evidence="4">
    <location>
        <position position="322"/>
    </location>
</feature>
<feature type="glycosylation site" description="N-linked (GlcNAc...) asparagine" evidence="4">
    <location>
        <position position="365"/>
    </location>
</feature>
<feature type="glycosylation site" description="N-linked (GlcNAc...) asparagine" evidence="4">
    <location>
        <position position="374"/>
    </location>
</feature>
<feature type="glycosylation site" description="N-linked (GlcNAc...) asparagine" evidence="4">
    <location>
        <position position="384"/>
    </location>
</feature>
<feature type="glycosylation site" description="N-linked (GlcNAc...) asparagine" evidence="4">
    <location>
        <position position="408"/>
    </location>
</feature>
<feature type="glycosylation site" description="N-linked (GlcNAc...) asparagine" evidence="4">
    <location>
        <position position="454"/>
    </location>
</feature>
<feature type="glycosylation site" description="N-linked (GlcNAc...) asparagine" evidence="4">
    <location>
        <position position="467"/>
    </location>
</feature>
<feature type="glycosylation site" description="N-linked (GlcNAc...) asparagine" evidence="4">
    <location>
        <position position="623"/>
    </location>
</feature>
<feature type="glycosylation site" description="N-linked (GlcNAc...) asparagine" evidence="4">
    <location>
        <position position="628"/>
    </location>
</feature>
<feature type="glycosylation site" description="N-linked (GlcNAc...) asparagine" evidence="4">
    <location>
        <position position="652"/>
    </location>
</feature>
<feature type="glycosylation site" description="N-linked (GlcNAc...) asparagine" evidence="4">
    <location>
        <position position="671"/>
    </location>
</feature>
<feature type="glycosylation site" description="N-linked (GlcNAc...) asparagine" evidence="4">
    <location>
        <position position="709"/>
    </location>
</feature>
<feature type="glycosylation site" description="N-linked (GlcNAc...) asparagine" evidence="4">
    <location>
        <position position="713"/>
    </location>
</feature>
<accession>C0LGJ1</accession>
<accession>Q9CA77</accession>
<comment type="catalytic activity">
    <reaction>
        <text>L-seryl-[protein] + ATP = O-phospho-L-seryl-[protein] + ADP + H(+)</text>
        <dbReference type="Rhea" id="RHEA:17989"/>
        <dbReference type="Rhea" id="RHEA-COMP:9863"/>
        <dbReference type="Rhea" id="RHEA-COMP:11604"/>
        <dbReference type="ChEBI" id="CHEBI:15378"/>
        <dbReference type="ChEBI" id="CHEBI:29999"/>
        <dbReference type="ChEBI" id="CHEBI:30616"/>
        <dbReference type="ChEBI" id="CHEBI:83421"/>
        <dbReference type="ChEBI" id="CHEBI:456216"/>
        <dbReference type="EC" id="2.7.11.1"/>
    </reaction>
</comment>
<comment type="catalytic activity">
    <reaction>
        <text>L-threonyl-[protein] + ATP = O-phospho-L-threonyl-[protein] + ADP + H(+)</text>
        <dbReference type="Rhea" id="RHEA:46608"/>
        <dbReference type="Rhea" id="RHEA-COMP:11060"/>
        <dbReference type="Rhea" id="RHEA-COMP:11605"/>
        <dbReference type="ChEBI" id="CHEBI:15378"/>
        <dbReference type="ChEBI" id="CHEBI:30013"/>
        <dbReference type="ChEBI" id="CHEBI:30616"/>
        <dbReference type="ChEBI" id="CHEBI:61977"/>
        <dbReference type="ChEBI" id="CHEBI:456216"/>
        <dbReference type="EC" id="2.7.11.1"/>
    </reaction>
</comment>
<comment type="interaction">
    <interactant intactId="EBI-20652666">
        <id>C0LGJ1</id>
    </interactant>
    <interactant intactId="EBI-16954682">
        <id>Q9M9S4</id>
        <label>At1g14390</label>
    </interactant>
    <organismsDiffer>false</organismsDiffer>
    <experiments>2</experiments>
</comment>
<comment type="interaction">
    <interactant intactId="EBI-20652666">
        <id>C0LGJ1</id>
    </interactant>
    <interactant intactId="EBI-20651261">
        <id>Q9SHI2</id>
        <label>At1g17230</label>
    </interactant>
    <organismsDiffer>false</organismsDiffer>
    <experiments>3</experiments>
</comment>
<comment type="interaction">
    <interactant intactId="EBI-20652666">
        <id>C0LGJ1</id>
    </interactant>
    <interactant intactId="EBI-20657062">
        <id>Q9FL63</id>
        <label>At5g24100</label>
    </interactant>
    <organismsDiffer>false</organismsDiffer>
    <experiments>3</experiments>
</comment>
<comment type="interaction">
    <interactant intactId="EBI-20652666">
        <id>C0LGJ1</id>
    </interactant>
    <interactant intactId="EBI-16914444">
        <id>Q9LJY0</id>
        <label>PRK4</label>
    </interactant>
    <organismsDiffer>false</organismsDiffer>
    <experiments>2</experiments>
</comment>
<comment type="interaction">
    <interactant intactId="EBI-20652666">
        <id>C0LGJ1</id>
    </interactant>
    <interactant intactId="EBI-1626936">
        <id>Q9LVI6</id>
        <label>RLK902</label>
    </interactant>
    <organismsDiffer>false</organismsDiffer>
    <experiments>4</experiments>
</comment>
<comment type="subcellular location">
    <subcellularLocation>
        <location evidence="7">Mitochondrion membrane</location>
        <topology evidence="7">Single-pass type I membrane protein</topology>
    </subcellularLocation>
</comment>
<comment type="similarity">
    <text evidence="5">Belongs to the protein kinase superfamily. Ser/Thr protein kinase family.</text>
</comment>
<comment type="sequence caution" evidence="8">
    <conflict type="erroneous gene model prediction">
        <sequence resource="EMBL-CDS" id="AAG52362"/>
    </conflict>
</comment>
<reference key="1">
    <citation type="journal article" date="2000" name="Nature">
        <title>Sequence and analysis of chromosome 1 of the plant Arabidopsis thaliana.</title>
        <authorList>
            <person name="Theologis A."/>
            <person name="Ecker J.R."/>
            <person name="Palm C.J."/>
            <person name="Federspiel N.A."/>
            <person name="Kaul S."/>
            <person name="White O."/>
            <person name="Alonso J."/>
            <person name="Altafi H."/>
            <person name="Araujo R."/>
            <person name="Bowman C.L."/>
            <person name="Brooks S.Y."/>
            <person name="Buehler E."/>
            <person name="Chan A."/>
            <person name="Chao Q."/>
            <person name="Chen H."/>
            <person name="Cheuk R.F."/>
            <person name="Chin C.W."/>
            <person name="Chung M.K."/>
            <person name="Conn L."/>
            <person name="Conway A.B."/>
            <person name="Conway A.R."/>
            <person name="Creasy T.H."/>
            <person name="Dewar K."/>
            <person name="Dunn P."/>
            <person name="Etgu P."/>
            <person name="Feldblyum T.V."/>
            <person name="Feng J.-D."/>
            <person name="Fong B."/>
            <person name="Fujii C.Y."/>
            <person name="Gill J.E."/>
            <person name="Goldsmith A.D."/>
            <person name="Haas B."/>
            <person name="Hansen N.F."/>
            <person name="Hughes B."/>
            <person name="Huizar L."/>
            <person name="Hunter J.L."/>
            <person name="Jenkins J."/>
            <person name="Johnson-Hopson C."/>
            <person name="Khan S."/>
            <person name="Khaykin E."/>
            <person name="Kim C.J."/>
            <person name="Koo H.L."/>
            <person name="Kremenetskaia I."/>
            <person name="Kurtz D.B."/>
            <person name="Kwan A."/>
            <person name="Lam B."/>
            <person name="Langin-Hooper S."/>
            <person name="Lee A."/>
            <person name="Lee J.M."/>
            <person name="Lenz C.A."/>
            <person name="Li J.H."/>
            <person name="Li Y.-P."/>
            <person name="Lin X."/>
            <person name="Liu S.X."/>
            <person name="Liu Z.A."/>
            <person name="Luros J.S."/>
            <person name="Maiti R."/>
            <person name="Marziali A."/>
            <person name="Militscher J."/>
            <person name="Miranda M."/>
            <person name="Nguyen M."/>
            <person name="Nierman W.C."/>
            <person name="Osborne B.I."/>
            <person name="Pai G."/>
            <person name="Peterson J."/>
            <person name="Pham P.K."/>
            <person name="Rizzo M."/>
            <person name="Rooney T."/>
            <person name="Rowley D."/>
            <person name="Sakano H."/>
            <person name="Salzberg S.L."/>
            <person name="Schwartz J.R."/>
            <person name="Shinn P."/>
            <person name="Southwick A.M."/>
            <person name="Sun H."/>
            <person name="Tallon L.J."/>
            <person name="Tambunga G."/>
            <person name="Toriumi M.J."/>
            <person name="Town C.D."/>
            <person name="Utterback T."/>
            <person name="Van Aken S."/>
            <person name="Vaysberg M."/>
            <person name="Vysotskaia V.S."/>
            <person name="Walker M."/>
            <person name="Wu D."/>
            <person name="Yu G."/>
            <person name="Fraser C.M."/>
            <person name="Venter J.C."/>
            <person name="Davis R.W."/>
        </authorList>
    </citation>
    <scope>NUCLEOTIDE SEQUENCE [LARGE SCALE GENOMIC DNA]</scope>
    <source>
        <strain>cv. Columbia</strain>
    </source>
</reference>
<reference key="2">
    <citation type="journal article" date="2017" name="Plant J.">
        <title>Araport11: a complete reannotation of the Arabidopsis thaliana reference genome.</title>
        <authorList>
            <person name="Cheng C.Y."/>
            <person name="Krishnakumar V."/>
            <person name="Chan A.P."/>
            <person name="Thibaud-Nissen F."/>
            <person name="Schobel S."/>
            <person name="Town C.D."/>
        </authorList>
    </citation>
    <scope>GENOME REANNOTATION</scope>
    <source>
        <strain>cv. Columbia</strain>
    </source>
</reference>
<reference key="3">
    <citation type="journal article" date="2010" name="BMC Genomics">
        <title>Genome-wide cloning and sequence analysis of leucine-rich repeat receptor-like protein kinase genes in Arabidopsis thaliana.</title>
        <authorList>
            <person name="Gou X."/>
            <person name="He K."/>
            <person name="Yang H."/>
            <person name="Yuan T."/>
            <person name="Lin H."/>
            <person name="Clouse S.D."/>
            <person name="Li J."/>
        </authorList>
    </citation>
    <scope>NUCLEOTIDE SEQUENCE [LARGE SCALE MRNA]</scope>
    <source>
        <strain>cv. Columbia</strain>
    </source>
</reference>
<reference key="4">
    <citation type="journal article" date="2004" name="Plant Cell">
        <title>Experimental analysis of the Arabidopsis mitochondrial proteome highlights signaling and regulatory components, provides assessment of targeting prediction programs, and indicates plant-specific mitochondrial proteins.</title>
        <authorList>
            <person name="Heazlewood J.L."/>
            <person name="Tonti-Filippini J.S."/>
            <person name="Gout A.M."/>
            <person name="Day D.A."/>
            <person name="Whelan J."/>
            <person name="Millar A.H."/>
        </authorList>
    </citation>
    <scope>IDENTIFICATION BY MASS SPECTROMETRY</scope>
    <scope>SUBCELLULAR LOCATION [LARGE SCALE ANALYSIS]</scope>
    <source>
        <strain>cv. Landsberg erecta</strain>
    </source>
</reference>
<proteinExistence type="evidence at protein level"/>
<dbReference type="EC" id="2.7.11.1"/>
<dbReference type="EMBL" id="AC011765">
    <property type="protein sequence ID" value="AAG52362.1"/>
    <property type="status" value="ALT_SEQ"/>
    <property type="molecule type" value="Genomic_DNA"/>
</dbReference>
<dbReference type="EMBL" id="CP002684">
    <property type="protein sequence ID" value="AEE35582.1"/>
    <property type="molecule type" value="Genomic_DNA"/>
</dbReference>
<dbReference type="EMBL" id="FJ708681">
    <property type="protein sequence ID" value="ACN59276.1"/>
    <property type="molecule type" value="mRNA"/>
</dbReference>
<dbReference type="PIR" id="C96772">
    <property type="entry name" value="C96772"/>
</dbReference>
<dbReference type="RefSeq" id="NP_565084.1">
    <property type="nucleotide sequence ID" value="NM_106096.4"/>
</dbReference>
<dbReference type="SMR" id="C0LGJ1"/>
<dbReference type="BioGRID" id="28996">
    <property type="interactions" value="21"/>
</dbReference>
<dbReference type="FunCoup" id="C0LGJ1">
    <property type="interactions" value="178"/>
</dbReference>
<dbReference type="IntAct" id="C0LGJ1">
    <property type="interactions" value="26"/>
</dbReference>
<dbReference type="STRING" id="3702.C0LGJ1"/>
<dbReference type="GlyGen" id="C0LGJ1">
    <property type="glycosylation" value="21 sites"/>
</dbReference>
<dbReference type="PaxDb" id="3702-AT1G74360.1"/>
<dbReference type="ProteomicsDB" id="242987"/>
<dbReference type="EnsemblPlants" id="AT1G74360.1">
    <property type="protein sequence ID" value="AT1G74360.1"/>
    <property type="gene ID" value="AT1G74360"/>
</dbReference>
<dbReference type="GeneID" id="843777"/>
<dbReference type="Gramene" id="AT1G74360.1">
    <property type="protein sequence ID" value="AT1G74360.1"/>
    <property type="gene ID" value="AT1G74360"/>
</dbReference>
<dbReference type="KEGG" id="ath:AT1G74360"/>
<dbReference type="Araport" id="AT1G74360"/>
<dbReference type="TAIR" id="AT1G74360">
    <property type="gene designation" value="NILR1"/>
</dbReference>
<dbReference type="eggNOG" id="ENOG502QQCM">
    <property type="taxonomic scope" value="Eukaryota"/>
</dbReference>
<dbReference type="HOGENOM" id="CLU_000288_22_9_1"/>
<dbReference type="InParanoid" id="C0LGJ1"/>
<dbReference type="OMA" id="EIGSMQN"/>
<dbReference type="PhylomeDB" id="C0LGJ1"/>
<dbReference type="PRO" id="PR:C0LGJ1"/>
<dbReference type="Proteomes" id="UP000006548">
    <property type="component" value="Chromosome 1"/>
</dbReference>
<dbReference type="ExpressionAtlas" id="C0LGJ1">
    <property type="expression patterns" value="baseline and differential"/>
</dbReference>
<dbReference type="GO" id="GO:0031966">
    <property type="term" value="C:mitochondrial membrane"/>
    <property type="evidence" value="ECO:0007669"/>
    <property type="project" value="UniProtKB-SubCell"/>
</dbReference>
<dbReference type="GO" id="GO:0005739">
    <property type="term" value="C:mitochondrion"/>
    <property type="evidence" value="ECO:0007005"/>
    <property type="project" value="TAIR"/>
</dbReference>
<dbReference type="GO" id="GO:0005886">
    <property type="term" value="C:plasma membrane"/>
    <property type="evidence" value="ECO:0000314"/>
    <property type="project" value="TAIR"/>
</dbReference>
<dbReference type="GO" id="GO:0005524">
    <property type="term" value="F:ATP binding"/>
    <property type="evidence" value="ECO:0007669"/>
    <property type="project" value="UniProtKB-KW"/>
</dbReference>
<dbReference type="GO" id="GO:0106310">
    <property type="term" value="F:protein serine kinase activity"/>
    <property type="evidence" value="ECO:0007669"/>
    <property type="project" value="RHEA"/>
</dbReference>
<dbReference type="GO" id="GO:0004674">
    <property type="term" value="F:protein serine/threonine kinase activity"/>
    <property type="evidence" value="ECO:0007669"/>
    <property type="project" value="UniProtKB-KW"/>
</dbReference>
<dbReference type="GO" id="GO:0002215">
    <property type="term" value="P:defense response to nematode"/>
    <property type="evidence" value="ECO:0000315"/>
    <property type="project" value="TAIR"/>
</dbReference>
<dbReference type="GO" id="GO:0009825">
    <property type="term" value="P:multidimensional cell growth"/>
    <property type="evidence" value="ECO:0000315"/>
    <property type="project" value="TAIR"/>
</dbReference>
<dbReference type="GO" id="GO:0009845">
    <property type="term" value="P:seed germination"/>
    <property type="evidence" value="ECO:0000315"/>
    <property type="project" value="TAIR"/>
</dbReference>
<dbReference type="CDD" id="cd14066">
    <property type="entry name" value="STKc_IRAK"/>
    <property type="match status" value="1"/>
</dbReference>
<dbReference type="FunFam" id="1.10.510.10:FF:000309">
    <property type="entry name" value="Leucine-rich repeat receptor-like protein kinase"/>
    <property type="match status" value="1"/>
</dbReference>
<dbReference type="FunFam" id="3.80.10.10:FF:000041">
    <property type="entry name" value="LRR receptor-like serine/threonine-protein kinase ERECTA"/>
    <property type="match status" value="1"/>
</dbReference>
<dbReference type="FunFam" id="3.80.10.10:FF:000620">
    <property type="entry name" value="Putative LRR receptor-like serine/threonine-protein kinase"/>
    <property type="match status" value="1"/>
</dbReference>
<dbReference type="FunFam" id="3.80.10.10:FF:000691">
    <property type="entry name" value="Putative LRR receptor-like serine/threonine-protein kinase"/>
    <property type="match status" value="1"/>
</dbReference>
<dbReference type="FunFam" id="3.80.10.10:FF:001121">
    <property type="entry name" value="Putative LRR receptor-like serine/threonine-protein kinase"/>
    <property type="match status" value="1"/>
</dbReference>
<dbReference type="FunFam" id="3.30.200.20:FF:000150">
    <property type="entry name" value="serine/threonine-protein kinase BRI1-like 2"/>
    <property type="match status" value="1"/>
</dbReference>
<dbReference type="Gene3D" id="3.30.200.20">
    <property type="entry name" value="Phosphorylase Kinase, domain 1"/>
    <property type="match status" value="1"/>
</dbReference>
<dbReference type="Gene3D" id="3.80.10.10">
    <property type="entry name" value="Ribonuclease Inhibitor"/>
    <property type="match status" value="4"/>
</dbReference>
<dbReference type="Gene3D" id="1.10.510.10">
    <property type="entry name" value="Transferase(Phosphotransferase) domain 1"/>
    <property type="match status" value="1"/>
</dbReference>
<dbReference type="InterPro" id="IPR011009">
    <property type="entry name" value="Kinase-like_dom_sf"/>
</dbReference>
<dbReference type="InterPro" id="IPR001611">
    <property type="entry name" value="Leu-rich_rpt"/>
</dbReference>
<dbReference type="InterPro" id="IPR003591">
    <property type="entry name" value="Leu-rich_rpt_typical-subtyp"/>
</dbReference>
<dbReference type="InterPro" id="IPR032675">
    <property type="entry name" value="LRR_dom_sf"/>
</dbReference>
<dbReference type="InterPro" id="IPR013210">
    <property type="entry name" value="LRR_N_plant-typ"/>
</dbReference>
<dbReference type="InterPro" id="IPR050647">
    <property type="entry name" value="Plant_LRR-RLKs"/>
</dbReference>
<dbReference type="InterPro" id="IPR000719">
    <property type="entry name" value="Prot_kinase_dom"/>
</dbReference>
<dbReference type="InterPro" id="IPR017441">
    <property type="entry name" value="Protein_kinase_ATP_BS"/>
</dbReference>
<dbReference type="InterPro" id="IPR008271">
    <property type="entry name" value="Ser/Thr_kinase_AS"/>
</dbReference>
<dbReference type="PANTHER" id="PTHR48056">
    <property type="entry name" value="LRR RECEPTOR-LIKE SERINE/THREONINE-PROTEIN KINASE-RELATED"/>
    <property type="match status" value="1"/>
</dbReference>
<dbReference type="PANTHER" id="PTHR48056:SF89">
    <property type="entry name" value="OS06G0585982 PROTEIN"/>
    <property type="match status" value="1"/>
</dbReference>
<dbReference type="Pfam" id="PF00560">
    <property type="entry name" value="LRR_1"/>
    <property type="match status" value="6"/>
</dbReference>
<dbReference type="Pfam" id="PF13516">
    <property type="entry name" value="LRR_6"/>
    <property type="match status" value="2"/>
</dbReference>
<dbReference type="Pfam" id="PF13855">
    <property type="entry name" value="LRR_8"/>
    <property type="match status" value="2"/>
</dbReference>
<dbReference type="Pfam" id="PF08263">
    <property type="entry name" value="LRRNT_2"/>
    <property type="match status" value="1"/>
</dbReference>
<dbReference type="Pfam" id="PF00069">
    <property type="entry name" value="Pkinase"/>
    <property type="match status" value="1"/>
</dbReference>
<dbReference type="SMART" id="SM00369">
    <property type="entry name" value="LRR_TYP"/>
    <property type="match status" value="7"/>
</dbReference>
<dbReference type="SMART" id="SM00220">
    <property type="entry name" value="S_TKc"/>
    <property type="match status" value="1"/>
</dbReference>
<dbReference type="SUPFAM" id="SSF52058">
    <property type="entry name" value="L domain-like"/>
    <property type="match status" value="2"/>
</dbReference>
<dbReference type="SUPFAM" id="SSF56112">
    <property type="entry name" value="Protein kinase-like (PK-like)"/>
    <property type="match status" value="1"/>
</dbReference>
<dbReference type="PROSITE" id="PS51450">
    <property type="entry name" value="LRR"/>
    <property type="match status" value="12"/>
</dbReference>
<dbReference type="PROSITE" id="PS00107">
    <property type="entry name" value="PROTEIN_KINASE_ATP"/>
    <property type="match status" value="1"/>
</dbReference>
<dbReference type="PROSITE" id="PS50011">
    <property type="entry name" value="PROTEIN_KINASE_DOM"/>
    <property type="match status" value="1"/>
</dbReference>
<dbReference type="PROSITE" id="PS00108">
    <property type="entry name" value="PROTEIN_KINASE_ST"/>
    <property type="match status" value="1"/>
</dbReference>
<evidence type="ECO:0000250" key="1">
    <source>
        <dbReference type="UniProtKB" id="C0LGT6"/>
    </source>
</evidence>
<evidence type="ECO:0000250" key="2">
    <source>
        <dbReference type="UniProtKB" id="O22476"/>
    </source>
</evidence>
<evidence type="ECO:0000250" key="3">
    <source>
        <dbReference type="UniProtKB" id="Q9M0G7"/>
    </source>
</evidence>
<evidence type="ECO:0000255" key="4"/>
<evidence type="ECO:0000255" key="5">
    <source>
        <dbReference type="PROSITE-ProRule" id="PRU00159"/>
    </source>
</evidence>
<evidence type="ECO:0000255" key="6">
    <source>
        <dbReference type="PROSITE-ProRule" id="PRU10027"/>
    </source>
</evidence>
<evidence type="ECO:0000269" key="7">
    <source>
    </source>
</evidence>
<evidence type="ECO:0000305" key="8"/>
<organism>
    <name type="scientific">Arabidopsis thaliana</name>
    <name type="common">Mouse-ear cress</name>
    <dbReference type="NCBI Taxonomy" id="3702"/>
    <lineage>
        <taxon>Eukaryota</taxon>
        <taxon>Viridiplantae</taxon>
        <taxon>Streptophyta</taxon>
        <taxon>Embryophyta</taxon>
        <taxon>Tracheophyta</taxon>
        <taxon>Spermatophyta</taxon>
        <taxon>Magnoliopsida</taxon>
        <taxon>eudicotyledons</taxon>
        <taxon>Gunneridae</taxon>
        <taxon>Pentapetalae</taxon>
        <taxon>rosids</taxon>
        <taxon>malvids</taxon>
        <taxon>Brassicales</taxon>
        <taxon>Brassicaceae</taxon>
        <taxon>Camelineae</taxon>
        <taxon>Arabidopsis</taxon>
    </lineage>
</organism>
<keyword id="KW-0067">ATP-binding</keyword>
<keyword id="KW-0325">Glycoprotein</keyword>
<keyword id="KW-0418">Kinase</keyword>
<keyword id="KW-0433">Leucine-rich repeat</keyword>
<keyword id="KW-0472">Membrane</keyword>
<keyword id="KW-0496">Mitochondrion</keyword>
<keyword id="KW-0547">Nucleotide-binding</keyword>
<keyword id="KW-0597">Phosphoprotein</keyword>
<keyword id="KW-0675">Receptor</keyword>
<keyword id="KW-1185">Reference proteome</keyword>
<keyword id="KW-0677">Repeat</keyword>
<keyword id="KW-0723">Serine/threonine-protein kinase</keyword>
<keyword id="KW-0732">Signal</keyword>
<keyword id="KW-0808">Transferase</keyword>
<keyword id="KW-0812">Transmembrane</keyword>
<keyword id="KW-1133">Transmembrane helix</keyword>
<name>Y1743_ARATH</name>
<gene>
    <name type="ordered locus">At1g74360</name>
    <name type="ORF">F1M20.4</name>
</gene>
<sequence>MTMVTRVIMTDDDSQSLCFLCFLLFFFITAIAVAGDSLDSDREVLLSLKSYLESRNPQNRGLYTEWKMENQDVVCQWPGIICTPQRSRVTGINLTDSTISGPLFKNFSALTELTYLDLSRNTIEGEIPDDLSRCHNLKHLNLSHNILEGELSLPGLSNLEVLDLSLNRITGDIQSSFPLFCNSLVVANLSTNNFTGRIDDIFNGCRNLKYVDFSSNRFSGEVWTGFGRLVEFSVADNHLSGNISASMFRGNCTLQMLDLSGNAFGGEFPGQVSNCQNLNVLNLWGNKFTGNIPAEIGSISSLKGLYLGNNTFSRDIPETLLNLTNLVFLDLSRNKFGGDIQEIFGRFTQVKYLVLHANSYVGGINSSNILKLPNLSRLDLGYNNFSGQLPTEISQIQSLKFLILAYNNFSGDIPQEYGNMPGLQALDLSFNKLTGSIPASFGKLTSLLWLMLANNSLSGEIPREIGNCTSLLWFNVANNQLSGRFHPELTRMGSNPSPTFEVNRQNKDKIIAGSGECLAMKRWIPAEFPPFNFVYAILTKKSCRSLWDHVLKGYGLFPVCSAGSTVRTLKISAYLQLSGNKFSGEIPASISQMDRLSTLHLGFNEFEGKLPPEIGQLPLAFLNLTRNNFSGEIPQEIGNLKCLQNLDLSFNNFSGNFPTSLNDLNELSKFNISYNPFISGAIPTTGQVATFDKDSFLGNPLLRFPSFFNQSGNNTRKISNQVLGNRPRTLLLIWISLALALAFIACLVVSGIVLMVVKASREAEIDLLDGSKTRHDMTSSSGGSSPWLSGKIKVIRLDKSTFTYADILKATSNFSEERVVGRGGYGTVYRGVLPDGREVAVKKLQREGTEAEKEFRAEMEVLSANAFGDWAHPNLVRLYGWCLDGSEKILVHEYMGGGSLEELITDKTKLQWKKRIDIATDVARGLVFLHHECYPSIVHRDVKASNVLLDKHGNARVTDFGLARLLNVGDSHVSTVIAGTIGYVAPEYGQTWQATTRGDVYSYGVLTMELATGRRAVDGGEECLVEWARRVMTGNMTAKGSPITLSGTKPGNGAEQMTELLKIGVKCTADHPQARPNMKEVLAMLVKISGKAELFNGLSSQGYIEM</sequence>
<protein>
    <recommendedName>
        <fullName>Probable LRR receptor-like serine/threonine-protein kinase At1g74360</fullName>
        <ecNumber>2.7.11.1</ecNumber>
    </recommendedName>
</protein>